<reference key="1">
    <citation type="journal article" date="2003" name="Nature">
        <title>Genome divergence in two Prochlorococcus ecotypes reflects oceanic niche differentiation.</title>
        <authorList>
            <person name="Rocap G."/>
            <person name="Larimer F.W."/>
            <person name="Lamerdin J.E."/>
            <person name="Malfatti S."/>
            <person name="Chain P."/>
            <person name="Ahlgren N.A."/>
            <person name="Arellano A."/>
            <person name="Coleman M."/>
            <person name="Hauser L."/>
            <person name="Hess W.R."/>
            <person name="Johnson Z.I."/>
            <person name="Land M.L."/>
            <person name="Lindell D."/>
            <person name="Post A.F."/>
            <person name="Regala W."/>
            <person name="Shah M."/>
            <person name="Shaw S.L."/>
            <person name="Steglich C."/>
            <person name="Sullivan M.B."/>
            <person name="Ting C.S."/>
            <person name="Tolonen A."/>
            <person name="Webb E.A."/>
            <person name="Zinser E.R."/>
            <person name="Chisholm S.W."/>
        </authorList>
    </citation>
    <scope>NUCLEOTIDE SEQUENCE [LARGE SCALE GENOMIC DNA]</scope>
    <source>
        <strain>MIT 9313</strain>
    </source>
</reference>
<accession>Q7V5X6</accession>
<keyword id="KW-0328">Glycosyltransferase</keyword>
<keyword id="KW-0441">Lipid A biosynthesis</keyword>
<keyword id="KW-0444">Lipid biosynthesis</keyword>
<keyword id="KW-0443">Lipid metabolism</keyword>
<keyword id="KW-1185">Reference proteome</keyword>
<keyword id="KW-0808">Transferase</keyword>
<name>LPXB_PROMM</name>
<feature type="chain" id="PRO_0000190176" description="Lipid-A-disaccharide synthase">
    <location>
        <begin position="1"/>
        <end position="392"/>
    </location>
</feature>
<sequence>MVRLLISTGEVSGDLQGSLLIQALQREVERRSLPLELMALGGPRMQASGAELLADTAPMGAIGLWEALPLVLPTLRLQSRVDHVLKQRPPDAVVLIDYMGANVRLGHKLRRWFPRVPIIYYIAPQEWAWRFGDGGTTQLLSFTDRILAIFPVEAEFYSQRGAKVTWVGHPLLDTVSVLPDRQQARERLGLKPGQRLLLLLPASRQQELRYLMPTLAKAAALLQQRDQSLEVIVPAGLASFEKSLQEALEAAAVRGRVLSAQQADELKPMLYAAADLALGKSGTVNMEMALRGVPQVVGYKVSRITAFVARHFLRFRVEHISPVNLLLKERLVPELLQDELTAEALVQAAIPLLEDPAQRNEMLEGYRRLRQTLGVPGVTDRAAKEILDLTKT</sequence>
<organism>
    <name type="scientific">Prochlorococcus marinus (strain MIT 9313)</name>
    <dbReference type="NCBI Taxonomy" id="74547"/>
    <lineage>
        <taxon>Bacteria</taxon>
        <taxon>Bacillati</taxon>
        <taxon>Cyanobacteriota</taxon>
        <taxon>Cyanophyceae</taxon>
        <taxon>Synechococcales</taxon>
        <taxon>Prochlorococcaceae</taxon>
        <taxon>Prochlorococcus</taxon>
    </lineage>
</organism>
<dbReference type="EC" id="2.4.1.182" evidence="1"/>
<dbReference type="EMBL" id="BX548175">
    <property type="protein sequence ID" value="CAE21584.1"/>
    <property type="molecule type" value="Genomic_DNA"/>
</dbReference>
<dbReference type="RefSeq" id="WP_011130777.1">
    <property type="nucleotide sequence ID" value="NC_005071.1"/>
</dbReference>
<dbReference type="SMR" id="Q7V5X6"/>
<dbReference type="CAZy" id="GT19">
    <property type="family name" value="Glycosyltransferase Family 19"/>
</dbReference>
<dbReference type="KEGG" id="pmt:PMT_1409"/>
<dbReference type="eggNOG" id="COG0763">
    <property type="taxonomic scope" value="Bacteria"/>
</dbReference>
<dbReference type="HOGENOM" id="CLU_036577_3_0_3"/>
<dbReference type="OrthoDB" id="9801642at2"/>
<dbReference type="UniPathway" id="UPA00973"/>
<dbReference type="Proteomes" id="UP000001423">
    <property type="component" value="Chromosome"/>
</dbReference>
<dbReference type="GO" id="GO:0016020">
    <property type="term" value="C:membrane"/>
    <property type="evidence" value="ECO:0007669"/>
    <property type="project" value="GOC"/>
</dbReference>
<dbReference type="GO" id="GO:0008915">
    <property type="term" value="F:lipid-A-disaccharide synthase activity"/>
    <property type="evidence" value="ECO:0007669"/>
    <property type="project" value="UniProtKB-UniRule"/>
</dbReference>
<dbReference type="GO" id="GO:0005543">
    <property type="term" value="F:phospholipid binding"/>
    <property type="evidence" value="ECO:0007669"/>
    <property type="project" value="TreeGrafter"/>
</dbReference>
<dbReference type="GO" id="GO:0009245">
    <property type="term" value="P:lipid A biosynthetic process"/>
    <property type="evidence" value="ECO:0007669"/>
    <property type="project" value="UniProtKB-UniRule"/>
</dbReference>
<dbReference type="Gene3D" id="3.40.50.2000">
    <property type="entry name" value="Glycogen Phosphorylase B"/>
    <property type="match status" value="1"/>
</dbReference>
<dbReference type="HAMAP" id="MF_00392">
    <property type="entry name" value="LpxB"/>
    <property type="match status" value="1"/>
</dbReference>
<dbReference type="InterPro" id="IPR003835">
    <property type="entry name" value="Glyco_trans_19"/>
</dbReference>
<dbReference type="NCBIfam" id="TIGR00215">
    <property type="entry name" value="lpxB"/>
    <property type="match status" value="1"/>
</dbReference>
<dbReference type="PANTHER" id="PTHR30372">
    <property type="entry name" value="LIPID-A-DISACCHARIDE SYNTHASE"/>
    <property type="match status" value="1"/>
</dbReference>
<dbReference type="PANTHER" id="PTHR30372:SF4">
    <property type="entry name" value="LIPID-A-DISACCHARIDE SYNTHASE, MITOCHONDRIAL-RELATED"/>
    <property type="match status" value="1"/>
</dbReference>
<dbReference type="Pfam" id="PF02684">
    <property type="entry name" value="LpxB"/>
    <property type="match status" value="1"/>
</dbReference>
<dbReference type="SUPFAM" id="SSF53756">
    <property type="entry name" value="UDP-Glycosyltransferase/glycogen phosphorylase"/>
    <property type="match status" value="1"/>
</dbReference>
<gene>
    <name evidence="1" type="primary">lpxB</name>
    <name type="ordered locus">PMT_1409</name>
</gene>
<protein>
    <recommendedName>
        <fullName evidence="1">Lipid-A-disaccharide synthase</fullName>
        <ecNumber evidence="1">2.4.1.182</ecNumber>
    </recommendedName>
</protein>
<comment type="function">
    <text evidence="1">Condensation of UDP-2,3-diacylglucosamine and 2,3-diacylglucosamine-1-phosphate to form lipid A disaccharide, a precursor of lipid A, a phosphorylated glycolipid that anchors the lipopolysaccharide to the outer membrane of the cell.</text>
</comment>
<comment type="catalytic activity">
    <reaction evidence="1">
        <text>a lipid X + a UDP-2-N,3-O-bis[(3R)-3-hydroxyacyl]-alpha-D-glucosamine = a lipid A disaccharide + UDP + H(+)</text>
        <dbReference type="Rhea" id="RHEA:67828"/>
        <dbReference type="ChEBI" id="CHEBI:15378"/>
        <dbReference type="ChEBI" id="CHEBI:58223"/>
        <dbReference type="ChEBI" id="CHEBI:137748"/>
        <dbReference type="ChEBI" id="CHEBI:176338"/>
        <dbReference type="ChEBI" id="CHEBI:176343"/>
        <dbReference type="EC" id="2.4.1.182"/>
    </reaction>
</comment>
<comment type="pathway">
    <text evidence="1">Bacterial outer membrane biogenesis; LPS lipid A biosynthesis.</text>
</comment>
<comment type="similarity">
    <text evidence="1">Belongs to the LpxB family.</text>
</comment>
<evidence type="ECO:0000255" key="1">
    <source>
        <dbReference type="HAMAP-Rule" id="MF_00392"/>
    </source>
</evidence>
<proteinExistence type="inferred from homology"/>